<name>GVPF1_HALSA</name>
<reference evidence="21" key="1">
    <citation type="journal article" date="1991" name="Gene">
        <title>Structure and organization of the gas vesicle gene cluster on the Halobacterium halobium plasmid pNRC100.</title>
        <authorList>
            <person name="Jones J.G."/>
            <person name="Young D.C."/>
            <person name="Dassarma S."/>
        </authorList>
    </citation>
    <scope>NUCLEOTIDE SEQUENCE [GENOMIC DNA]</scope>
    <source>
        <strain>ATCC 700922 / JCM 11081 / NRC-1</strain>
        <plasmid>pNRC100</plasmid>
    </source>
</reference>
<reference evidence="23" key="2">
    <citation type="journal article" date="1991" name="Mol. Microbiol.">
        <title>A DNA region of 9 kbp contains all genes necessary for gas vesicle synthesis in halophilic archaebacteria.</title>
        <authorList>
            <person name="Horne M."/>
            <person name="Englert C."/>
            <person name="Wimmer C."/>
            <person name="Pfeifer F."/>
        </authorList>
    </citation>
    <scope>NUCLEOTIDE SEQUENCE [GENOMIC DNA]</scope>
    <scope>INDUCTION</scope>
    <scope>DISRUPTION PHENOTYPE</scope>
    <source>
        <strain>NRC-817</strain>
        <plasmid>pHH1</plasmid>
    </source>
</reference>
<reference key="3">
    <citation type="journal article" date="1998" name="Genome Res.">
        <title>Snapshot of a large dynamic replicon in a halophilic archaeon: megaplasmid or minichromosome?</title>
        <authorList>
            <person name="Ng W.V."/>
            <person name="Ciufo S.A."/>
            <person name="Smith T.M."/>
            <person name="Bumgarner R.E."/>
            <person name="Baskin D."/>
            <person name="Faust J."/>
            <person name="Hall B."/>
            <person name="Loretz C."/>
            <person name="Seto J."/>
            <person name="Slagel J."/>
            <person name="Hood L."/>
            <person name="DasSarma S."/>
        </authorList>
    </citation>
    <scope>NUCLEOTIDE SEQUENCE [LARGE SCALE GENOMIC DNA]</scope>
    <source>
        <strain>ATCC 700922 / JCM 11081 / NRC-1</strain>
        <plasmid>pNRC100</plasmid>
    </source>
</reference>
<reference evidence="22" key="4">
    <citation type="journal article" date="2000" name="Proc. Natl. Acad. Sci. U.S.A.">
        <title>Genome sequence of Halobacterium species NRC-1.</title>
        <authorList>
            <person name="Ng W.V."/>
            <person name="Kennedy S.P."/>
            <person name="Mahairas G.G."/>
            <person name="Berquist B."/>
            <person name="Pan M."/>
            <person name="Shukla H.D."/>
            <person name="Lasky S.R."/>
            <person name="Baliga N.S."/>
            <person name="Thorsson V."/>
            <person name="Sbrogna J."/>
            <person name="Swartzell S."/>
            <person name="Weir D."/>
            <person name="Hall J."/>
            <person name="Dahl T.A."/>
            <person name="Welti R."/>
            <person name="Goo Y.A."/>
            <person name="Leithauser B."/>
            <person name="Keller K."/>
            <person name="Cruz R."/>
            <person name="Danson M.J."/>
            <person name="Hough D.W."/>
            <person name="Maddocks D.G."/>
            <person name="Jablonski P.E."/>
            <person name="Krebs M.P."/>
            <person name="Angevine C.M."/>
            <person name="Dale H."/>
            <person name="Isenbarger T.A."/>
            <person name="Peck R.F."/>
            <person name="Pohlschroder M."/>
            <person name="Spudich J.L."/>
            <person name="Jung K.-H."/>
            <person name="Alam M."/>
            <person name="Freitas T."/>
            <person name="Hou S."/>
            <person name="Daniels C.J."/>
            <person name="Dennis P.P."/>
            <person name="Omer A.D."/>
            <person name="Ebhardt H."/>
            <person name="Lowe T.M."/>
            <person name="Liang P."/>
            <person name="Riley M."/>
            <person name="Hood L."/>
            <person name="DasSarma S."/>
        </authorList>
    </citation>
    <scope>NUCLEOTIDE SEQUENCE [LARGE SCALE GENOMIC DNA]</scope>
    <source>
        <strain>ATCC 700922 / JCM 11081 / NRC-1</strain>
        <plasmid>pNRC200</plasmid>
    </source>
</reference>
<reference key="5">
    <citation type="journal article" date="1992" name="Gene">
        <title>Genetic transformation of a halophilic archaebacterium with a gas vesicle gene cluster restores its ability to float.</title>
        <authorList>
            <person name="Halladay J.T."/>
            <person name="Ng W.L."/>
            <person name="DasSarma S."/>
        </authorList>
    </citation>
    <scope>FUNCTION</scope>
    <scope>GAS VESICLE PRODUCTION</scope>
    <source>
        <strain>ATCC 700922 / JCM 11081 / NRC-1</strain>
        <plasmid>pNRC100</plasmid>
    </source>
</reference>
<reference key="6">
    <citation type="journal article" date="1992" name="J. Mol. Biol.">
        <title>Three different but related gene clusters encoding gas vesicles in halophilic archaea.</title>
        <authorList>
            <person name="Englert C."/>
            <person name="Krueger K."/>
            <person name="Offner S."/>
            <person name="Pfeifer F."/>
        </authorList>
    </citation>
    <scope>GAS VESICLE GENE CLUSTER</scope>
    <source>
        <strain>NRC-817</strain>
        <plasmid>pHH1</plasmid>
    </source>
</reference>
<reference key="7">
    <citation type="journal article" date="1994" name="J. Bacteriol.">
        <title>Wild-type gas vesicle formation requires at least ten genes in the gvp gene cluster of Halobacterium halobium plasmid pNRC100.</title>
        <authorList>
            <person name="DasSarma S."/>
            <person name="Arora P."/>
            <person name="Lin F."/>
            <person name="Molinari E."/>
            <person name="Yin L.R."/>
        </authorList>
    </citation>
    <scope>DISRUPTION PHENOTYPE</scope>
    <source>
        <strain>ATCC 700922 / JCM 11081 / NRC-1</strain>
        <plasmid>pNRC100</plasmid>
    </source>
</reference>
<reference key="8">
    <citation type="journal article" date="1995" name="Mol. Microbiol.">
        <title>Complementation studies with the gas vesicle-encoding p-vac region of Halobacterium salinarium PHH1 reveal a regulatory role for the p-gvpDE genes.</title>
        <authorList>
            <person name="Offner S."/>
            <person name="Pfeifer F."/>
        </authorList>
    </citation>
    <scope>FUNCTION</scope>
    <scope>INDUCTION</scope>
    <scope>DISRUPTION PHENOTYPE</scope>
    <source>
        <strain>PHH1</strain>
    </source>
</reference>
<reference key="9">
    <citation type="journal article" date="1997" name="Microbiology">
        <title>Growth competition between Halobacterium salinarium strain PHH1 and mutants affected in gas vesicle synthesis.</title>
        <authorList>
            <person name="Beard S.J."/>
            <person name="Hayes P.K."/>
            <person name="Walsby A.E."/>
        </authorList>
    </citation>
    <scope>FUNCTION IN BUOYANCY</scope>
    <scope>POSSIBLE INDUCTION BY OXYGEN LIMITATION</scope>
    <source>
        <strain>PHH1</strain>
    </source>
</reference>
<reference key="10">
    <citation type="journal article" date="2000" name="J. Bacteriol.">
        <title>Eight of fourteen gvp genes are sufficient for formation of gas vesicles in halophilic archaea.</title>
        <authorList>
            <person name="Offner S."/>
            <person name="Hofacker A."/>
            <person name="Wanner G."/>
            <person name="Pfeifer F."/>
        </authorList>
    </citation>
    <scope>DISRUPTION PHENOTYPE</scope>
    <source>
        <strain>PHH1</strain>
        <plasmid>pHH1</plasmid>
    </source>
</reference>
<reference key="11">
    <citation type="journal article" date="2004" name="J. Bacteriol.">
        <title>Complexity of gas vesicle biogenesis in Halobacterium sp. strain NRC-1: identification of five new proteins.</title>
        <authorList>
            <person name="Shukla H.D."/>
            <person name="DasSarma S."/>
        </authorList>
    </citation>
    <scope>POSSIBLE FUNCTION</scope>
    <scope>SUBCELLULAR LOCATION</scope>
    <source>
        <strain>ATCC 700922 / JCM 11081 / NRC-1</strain>
        <plasmid>pNRC100</plasmid>
    </source>
</reference>
<reference key="12">
    <citation type="journal article" date="2011" name="J. Proteome Res.">
        <title>New structural proteins of Halobacterium salinarum gas vesicle revealed by comparative proteomics analysis.</title>
        <authorList>
            <person name="Chu L.J."/>
            <person name="Chen M.C."/>
            <person name="Setter J."/>
            <person name="Tsai Y.S."/>
            <person name="Yang H."/>
            <person name="Fang X."/>
            <person name="Ting Y.S."/>
            <person name="Shaffer S.A."/>
            <person name="Taylor G.K."/>
            <person name="von Haller P.D."/>
            <person name="Goodlett D.R."/>
            <person name="Ng W.V."/>
        </authorList>
    </citation>
    <scope>SUBCELLULAR LOCATION</scope>
    <scope>IDENTIFICATION BY MASS SPECTROMETRY</scope>
    <source>
        <strain>ATCC 700922 / JCM 11081 / NRC-1</strain>
    </source>
</reference>
<reference key="13">
    <citation type="journal article" date="2020" name="Front. Microbiol.">
        <title>Accessory Gvp Proteins Form a Complex During Gas Vesicle Formation of Haloarchaea.</title>
        <authorList>
            <person name="Voelkner K."/>
            <person name="Jost A."/>
            <person name="Pfeifer F."/>
        </authorList>
    </citation>
    <scope>FUNCTION</scope>
    <scope>INTERACTION WITH GVPA1</scope>
    <scope>SUBUNIT</scope>
    <source>
        <strain>PHH1</strain>
        <plasmid>pHH1</plasmid>
    </source>
</reference>
<reference key="14">
    <citation type="journal article" date="2021" name="Front. Microbiol.">
        <title>Effect of Mutations in GvpJ and GvpM on Gas Vesicle Formation of Halobacterium salinarum.</title>
        <authorList>
            <person name="Jost A."/>
            <person name="Knitsch R."/>
            <person name="Voelkner K."/>
            <person name="Pfeifer F."/>
        </authorList>
    </citation>
    <scope>INTERACTION WITH GVPA1</scope>
    <source>
        <strain>PHH1</strain>
        <plasmid>pHH1</plasmid>
    </source>
</reference>
<reference key="15">
    <citation type="journal article" date="2022" name="Front. Microbiol.">
        <title>Interaction of the gas vesicle proteins GvpA, GvpC, GvpN, and GvpO of Halobacterium salinarum.</title>
        <authorList>
            <person name="Jost A."/>
            <person name="Pfeifer F."/>
        </authorList>
    </citation>
    <scope>SUBUNIT</scope>
    <scope>DISRUPTION PHENOTYPE</scope>
    <scope>MUTAGENESIS OF GLU-3; GLU-14; ASP-15; ASP-19; GLU-65; GLU-71; GLU-72 AND ARG-213</scope>
    <source>
        <strain>PHH1</strain>
        <plasmid>pHH1</plasmid>
    </source>
</reference>
<feature type="chain" id="PRO_0000182681" description="Gas vesicle protein F1">
    <location>
        <begin position="1"/>
        <end position="213"/>
    </location>
</feature>
<feature type="mutagenesis site" description="Small gas vesicles." evidence="11">
    <original>E</original>
    <variation>A</variation>
    <location>
        <position position="3"/>
    </location>
</feature>
<feature type="mutagenesis site" description="Long, thin gas vesicles." evidence="11">
    <original>E</original>
    <variation>A</variation>
    <location>
        <position position="14"/>
    </location>
</feature>
<feature type="mutagenesis site" description="Small gas vesicles." evidence="11">
    <original>D</original>
    <variation>R</variation>
    <location>
        <position position="15"/>
    </location>
</feature>
<feature type="mutagenesis site" description="Small gas vesicles." evidence="11">
    <original>D</original>
    <variation>A</variation>
    <variation>R</variation>
    <location>
        <position position="19"/>
    </location>
</feature>
<feature type="mutagenesis site" description="Few, long, thin gas vesicles." evidence="11">
    <original>E</original>
    <variation>A</variation>
    <location>
        <position position="65"/>
    </location>
</feature>
<feature type="mutagenesis site" description="No gas vesicles." evidence="11">
    <original>E</original>
    <variation>R</variation>
    <location>
        <position position="71"/>
    </location>
</feature>
<feature type="mutagenesis site" description="No gas vesicles." evidence="11">
    <original>E</original>
    <variation>A</variation>
    <variation>R</variation>
    <location>
        <position position="72"/>
    </location>
</feature>
<feature type="mutagenesis site" description="No gas vesicles." evidence="11">
    <original>R</original>
    <variation>E</variation>
    <location>
        <position position="213"/>
    </location>
</feature>
<feature type="sequence conflict" description="In Ref. 2; CAA39173." evidence="17" ref="2">
    <original>T</original>
    <variation>P</variation>
    <location>
        <position position="31"/>
    </location>
</feature>
<organism>
    <name type="scientific">Halobacterium salinarum (strain ATCC 700922 / JCM 11081 / NRC-1)</name>
    <name type="common">Halobacterium halobium</name>
    <dbReference type="NCBI Taxonomy" id="64091"/>
    <lineage>
        <taxon>Archaea</taxon>
        <taxon>Methanobacteriati</taxon>
        <taxon>Methanobacteriota</taxon>
        <taxon>Stenosarchaea group</taxon>
        <taxon>Halobacteria</taxon>
        <taxon>Halobacteriales</taxon>
        <taxon>Halobacteriaceae</taxon>
        <taxon>Halobacterium</taxon>
        <taxon>Halobacterium salinarum NRC-34001</taxon>
    </lineage>
</organism>
<gene>
    <name type="primary">gvpF11</name>
    <name evidence="14" type="synonym">gvpF</name>
    <name evidence="16" type="synonym">p-gvpF</name>
    <name type="ordered locus">VNG_5027G</name>
</gene>
<gene>
    <name evidence="22" type="primary">gvpF1</name>
    <name evidence="22" type="ordered locus">VNG_6026G</name>
</gene>
<proteinExistence type="evidence at protein level"/>
<accession>Q9HI21</accession>
<accession>P24370</accession>
<accession>P57731</accession>
<dbReference type="EMBL" id="M58557">
    <property type="protein sequence ID" value="AAA98193.1"/>
    <property type="molecule type" value="Genomic_DNA"/>
</dbReference>
<dbReference type="EMBL" id="X55648">
    <property type="protein sequence ID" value="CAA39173.1"/>
    <property type="molecule type" value="Genomic_DNA"/>
</dbReference>
<dbReference type="EMBL" id="AF016485">
    <property type="protein sequence ID" value="AAC82806.1"/>
    <property type="molecule type" value="Genomic_DNA"/>
</dbReference>
<dbReference type="EMBL" id="AE004438">
    <property type="protein sequence ID" value="AAG20723.1"/>
    <property type="molecule type" value="Genomic_DNA"/>
</dbReference>
<dbReference type="PIR" id="T08239">
    <property type="entry name" value="T08239"/>
</dbReference>
<dbReference type="RefSeq" id="WP_010890522.1">
    <property type="nucleotide sequence ID" value="NC_001869.1"/>
</dbReference>
<dbReference type="SMR" id="Q9HI21"/>
<dbReference type="GeneID" id="5954621"/>
<dbReference type="KEGG" id="hal:gvpF"/>
<dbReference type="KEGG" id="hal:VNG_6026G"/>
<dbReference type="PATRIC" id="fig|64091.14.peg.2096"/>
<dbReference type="HOGENOM" id="CLU_065736_3_0_2"/>
<dbReference type="InParanoid" id="Q9HI21"/>
<dbReference type="OrthoDB" id="130966at2157"/>
<dbReference type="Proteomes" id="UP000000554">
    <property type="component" value="Plasmid pNRC100"/>
</dbReference>
<dbReference type="Proteomes" id="UP000000554">
    <property type="component" value="Plasmid pNRC200"/>
</dbReference>
<dbReference type="GO" id="GO:0005737">
    <property type="term" value="C:cytoplasm"/>
    <property type="evidence" value="ECO:0007669"/>
    <property type="project" value="UniProtKB-SubCell"/>
</dbReference>
<dbReference type="GO" id="GO:0031411">
    <property type="term" value="C:gas vesicle"/>
    <property type="evidence" value="ECO:0007669"/>
    <property type="project" value="UniProtKB-SubCell"/>
</dbReference>
<dbReference type="GO" id="GO:0031412">
    <property type="term" value="P:gas vesicle organization"/>
    <property type="evidence" value="ECO:0007669"/>
    <property type="project" value="InterPro"/>
</dbReference>
<dbReference type="InterPro" id="IPR009430">
    <property type="entry name" value="GvpL/GvpF"/>
</dbReference>
<dbReference type="PANTHER" id="PTHR36852">
    <property type="entry name" value="PROTEIN GVPL 2"/>
    <property type="match status" value="1"/>
</dbReference>
<dbReference type="PANTHER" id="PTHR36852:SF1">
    <property type="entry name" value="PROTEIN GVPL 2"/>
    <property type="match status" value="1"/>
</dbReference>
<dbReference type="Pfam" id="PF06386">
    <property type="entry name" value="GvpL_GvpF"/>
    <property type="match status" value="2"/>
</dbReference>
<comment type="function">
    <text evidence="5 9 18 20">Might be involved in preventing aggregation of GvpA1 (Probable) (PubMed:33281806). Proteins GvpF to GvpM might be involved in nucleating gas vesicle formation (Probable) (PubMed:15126480, PubMed:33281806). A minor component of the gas vesicle, also found in soluble extracts (PubMed:15126480). Gas vesicles are hollow, gas filled proteinaceous nanostructures found in several microbial planktonic microorganisms. They allow positioning of halobacteria at the optimal depth for growth in the poorly aerated, shallow brine pools of their habitat (PubMed:33711860).</text>
</comment>
<comment type="function">
    <text evidence="2 3 4 12">Expression of a 9.5 kb p-vac DNA fragment containing 2 divergently transcribed regions (gvpD-gvpE-gvpF-gvpG-gvpH-gvpI-gvpJ-gvpK-gvpL-gvpM and gvpA-gvpC-gvpN-gvpO) allows H.volcanii to produce gas vesicles (PubMed:10894744, PubMed:1404376, PubMed:7651141). A minimal gas vesicle can be made in H.volcanii by gvpA1-gvpO1 plus gvpF1-gvpG1-gvpJ1-gvpK1-gvpL1-gvpM1; lack of enough GvpJ1 prevents formation (PubMed:10894744). The same region restores gas vesicle production in H.halobium without the p-vac locus (PubMed:1398080).</text>
</comment>
<comment type="subunit">
    <text evidence="8 10 11">Binds GvpA1 in early growth stages; is the only one of GvpF1 to GvpM1 that interacts with GvpA1 in H.volcanii experiments (PubMed:33281806, PubMed:34975818). GvpF to GvpM interact with each other in vitro, and may form multi-subunit complex(es) (PubMed:33281806). Interacts with GvpC1 and GvpO1 (PubMed:35966690).</text>
</comment>
<comment type="subcellular location">
    <subcellularLocation>
        <location evidence="5 7">Gas vesicle</location>
    </subcellularLocation>
    <subcellularLocation>
        <location evidence="19">Cytoplasm</location>
    </subcellularLocation>
    <text evidence="1">Probably faces the interior of the gas vesicle.</text>
</comment>
<comment type="induction">
    <text evidence="6 9 12">Part of a gvpF1-gvpG1-gvpH1-gvpI1-gvpJ1-gvpK1-gvpL1-gvpM1 operon, maximally expressed in early to mid log phase (PubMed:1956294, PubMed:7651141). Detected at very low levels in growing cells, at slightly higher levels in stationary phase (at protein level). Not detected in isolated gas vesicles (PubMed:7651141). Gas vesicles appear earlier when grown in static culture, possibly due to O(2)-limitation (PubMed:33711860).</text>
</comment>
<comment type="disruption phenotype">
    <text evidence="2 6 11 12 13">No gas vesicles are made, gvpA1 is still transcribed.</text>
</comment>
<comment type="miscellaneous">
    <text evidence="4 6 9">Encoded in a 14-gene plasmid locus called p-vac which produces predominantly short, spindle-shaped gas vesicles during all stages of growth.</text>
</comment>
<comment type="similarity">
    <text evidence="17">Belongs to the gas vesicle GvpF/GvpL family.</text>
</comment>
<sequence length="213" mass="23962">MTENLYTYGIIEQEDLELDVEGVAGAEQVYTVDYKTLSAVVSDIDTTDPERTDEDVEAHNNVLQEVLKHEEERTVVPMSFGMAFKSARTLKGVLRGARRALRSTLNDIEGTVELGVKILGPGDDTVPREEIQENVTDQLADLSINETENDLFTDRLIINKSYLVDFEKRDAFDSAIDDVEAEYDELTIQYTGPWPPYNFVDIHIGAEQQQGGR</sequence>
<geneLocation type="plasmid">
    <name>pNRC100</name>
</geneLocation>
<geneLocation type="plasmid">
    <name>pNRC200</name>
</geneLocation>
<geneLocation type="plasmid">
    <name>pHH1</name>
</geneLocation>
<evidence type="ECO:0000250" key="1">
    <source>
        <dbReference type="UniProtKB" id="A8Y9T3"/>
    </source>
</evidence>
<evidence type="ECO:0000269" key="2">
    <source>
    </source>
</evidence>
<evidence type="ECO:0000269" key="3">
    <source>
    </source>
</evidence>
<evidence type="ECO:0000269" key="4">
    <source>
    </source>
</evidence>
<evidence type="ECO:0000269" key="5">
    <source>
    </source>
</evidence>
<evidence type="ECO:0000269" key="6">
    <source>
    </source>
</evidence>
<evidence type="ECO:0000269" key="7">
    <source>
    </source>
</evidence>
<evidence type="ECO:0000269" key="8">
    <source>
    </source>
</evidence>
<evidence type="ECO:0000269" key="9">
    <source>
    </source>
</evidence>
<evidence type="ECO:0000269" key="10">
    <source>
    </source>
</evidence>
<evidence type="ECO:0000269" key="11">
    <source>
    </source>
</evidence>
<evidence type="ECO:0000269" key="12">
    <source>
    </source>
</evidence>
<evidence type="ECO:0000269" key="13">
    <source>
    </source>
</evidence>
<evidence type="ECO:0000303" key="14">
    <source>
    </source>
</evidence>
<evidence type="ECO:0000303" key="15">
    <source>
    </source>
</evidence>
<evidence type="ECO:0000303" key="16">
    <source>
    </source>
</evidence>
<evidence type="ECO:0000305" key="17"/>
<evidence type="ECO:0000305" key="18">
    <source>
    </source>
</evidence>
<evidence type="ECO:0000305" key="19">
    <source>
    </source>
</evidence>
<evidence type="ECO:0000305" key="20">
    <source>
    </source>
</evidence>
<evidence type="ECO:0000312" key="21">
    <source>
        <dbReference type="EMBL" id="AAA98193.1"/>
    </source>
</evidence>
<evidence type="ECO:0000312" key="22">
    <source>
        <dbReference type="EMBL" id="AAG20723.1"/>
    </source>
</evidence>
<evidence type="ECO:0000312" key="23">
    <source>
        <dbReference type="EMBL" id="CAA39173.1"/>
    </source>
</evidence>
<protein>
    <recommendedName>
        <fullName evidence="15">Gas vesicle protein F1</fullName>
        <shortName evidence="15">GvpF</shortName>
    </recommendedName>
</protein>
<keyword id="KW-0963">Cytoplasm</keyword>
<keyword id="KW-0304">Gas vesicle</keyword>
<keyword id="KW-0614">Plasmid</keyword>
<keyword id="KW-1185">Reference proteome</keyword>